<keyword id="KW-0963">Cytoplasm</keyword>
<keyword id="KW-0227">DNA damage</keyword>
<keyword id="KW-0234">DNA repair</keyword>
<keyword id="KW-0255">Endonuclease</keyword>
<keyword id="KW-0378">Hydrolase</keyword>
<keyword id="KW-0540">Nuclease</keyword>
<keyword id="KW-1185">Reference proteome</keyword>
<evidence type="ECO:0000255" key="1">
    <source>
        <dbReference type="HAMAP-Rule" id="MF_00759"/>
    </source>
</evidence>
<gene>
    <name evidence="1" type="primary">mutH</name>
    <name type="ordered locus">Sama_0862</name>
</gene>
<protein>
    <recommendedName>
        <fullName evidence="1">DNA mismatch repair protein MutH</fullName>
    </recommendedName>
    <alternativeName>
        <fullName evidence="1">Methyl-directed mismatch repair protein</fullName>
    </alternativeName>
</protein>
<reference key="1">
    <citation type="submission" date="2006-12" db="EMBL/GenBank/DDBJ databases">
        <title>Complete sequence of Shewanella amazonensis SB2B.</title>
        <authorList>
            <consortium name="US DOE Joint Genome Institute"/>
            <person name="Copeland A."/>
            <person name="Lucas S."/>
            <person name="Lapidus A."/>
            <person name="Barry K."/>
            <person name="Detter J.C."/>
            <person name="Glavina del Rio T."/>
            <person name="Hammon N."/>
            <person name="Israni S."/>
            <person name="Dalin E."/>
            <person name="Tice H."/>
            <person name="Pitluck S."/>
            <person name="Munk A.C."/>
            <person name="Brettin T."/>
            <person name="Bruce D."/>
            <person name="Han C."/>
            <person name="Tapia R."/>
            <person name="Gilna P."/>
            <person name="Schmutz J."/>
            <person name="Larimer F."/>
            <person name="Land M."/>
            <person name="Hauser L."/>
            <person name="Kyrpides N."/>
            <person name="Mikhailova N."/>
            <person name="Fredrickson J."/>
            <person name="Richardson P."/>
        </authorList>
    </citation>
    <scope>NUCLEOTIDE SEQUENCE [LARGE SCALE GENOMIC DNA]</scope>
    <source>
        <strain>ATCC BAA-1098 / SB2B</strain>
    </source>
</reference>
<sequence>MNTPLPPQSLDELLRRAKMMAGLSLGQLAAGLGWPVPANLKRDKGWIGQLIEQELGATAGSRPEQDFLHLGVELKTIPIDRSGKPLETTYVCVAPLMDTHGLRWEQSLVKHKLERVLWVPVEGERDIPVADRRIGTAILWQPTPQQSASLRQDWEEIMEFIALGKVHRLSARHGEVLQLRPKAANAAAKTECIMEDGTVGLTNPRGFYLKIPFTQAILRQAFDY</sequence>
<proteinExistence type="inferred from homology"/>
<dbReference type="EMBL" id="CP000507">
    <property type="protein sequence ID" value="ABL99069.1"/>
    <property type="molecule type" value="Genomic_DNA"/>
</dbReference>
<dbReference type="RefSeq" id="WP_011758979.1">
    <property type="nucleotide sequence ID" value="NC_008700.1"/>
</dbReference>
<dbReference type="SMR" id="A1S3W3"/>
<dbReference type="STRING" id="326297.Sama_0862"/>
<dbReference type="KEGG" id="saz:Sama_0862"/>
<dbReference type="eggNOG" id="COG3066">
    <property type="taxonomic scope" value="Bacteria"/>
</dbReference>
<dbReference type="HOGENOM" id="CLU_086669_0_0_6"/>
<dbReference type="OrthoDB" id="5634909at2"/>
<dbReference type="Proteomes" id="UP000009175">
    <property type="component" value="Chromosome"/>
</dbReference>
<dbReference type="GO" id="GO:0005737">
    <property type="term" value="C:cytoplasm"/>
    <property type="evidence" value="ECO:0007669"/>
    <property type="project" value="UniProtKB-SubCell"/>
</dbReference>
<dbReference type="GO" id="GO:0003677">
    <property type="term" value="F:DNA binding"/>
    <property type="evidence" value="ECO:0007669"/>
    <property type="project" value="InterPro"/>
</dbReference>
<dbReference type="GO" id="GO:0004519">
    <property type="term" value="F:endonuclease activity"/>
    <property type="evidence" value="ECO:0007669"/>
    <property type="project" value="UniProtKB-UniRule"/>
</dbReference>
<dbReference type="GO" id="GO:0006304">
    <property type="term" value="P:DNA modification"/>
    <property type="evidence" value="ECO:0007669"/>
    <property type="project" value="InterPro"/>
</dbReference>
<dbReference type="GO" id="GO:0006298">
    <property type="term" value="P:mismatch repair"/>
    <property type="evidence" value="ECO:0007669"/>
    <property type="project" value="UniProtKB-UniRule"/>
</dbReference>
<dbReference type="CDD" id="cd00583">
    <property type="entry name" value="MutH-like"/>
    <property type="match status" value="1"/>
</dbReference>
<dbReference type="Gene3D" id="3.40.600.10">
    <property type="entry name" value="DNA mismatch repair MutH/Restriction endonuclease, type II"/>
    <property type="match status" value="1"/>
</dbReference>
<dbReference type="HAMAP" id="MF_00759">
    <property type="entry name" value="MutH"/>
    <property type="match status" value="1"/>
</dbReference>
<dbReference type="InterPro" id="IPR004230">
    <property type="entry name" value="DNA_mismatch_repair_MutH"/>
</dbReference>
<dbReference type="InterPro" id="IPR011337">
    <property type="entry name" value="DNA_rep_MutH/RE_typeII_Sau3AI"/>
</dbReference>
<dbReference type="InterPro" id="IPR037057">
    <property type="entry name" value="DNA_rep_MutH/T2_RE_sf"/>
</dbReference>
<dbReference type="InterPro" id="IPR011335">
    <property type="entry name" value="Restrct_endonuc-II-like"/>
</dbReference>
<dbReference type="NCBIfam" id="TIGR02248">
    <property type="entry name" value="mutH_TIGR"/>
    <property type="match status" value="1"/>
</dbReference>
<dbReference type="NCBIfam" id="NF003458">
    <property type="entry name" value="PRK05070.1"/>
    <property type="match status" value="1"/>
</dbReference>
<dbReference type="Pfam" id="PF02976">
    <property type="entry name" value="MutH"/>
    <property type="match status" value="1"/>
</dbReference>
<dbReference type="SMART" id="SM00927">
    <property type="entry name" value="MutH"/>
    <property type="match status" value="1"/>
</dbReference>
<dbReference type="SUPFAM" id="SSF52980">
    <property type="entry name" value="Restriction endonuclease-like"/>
    <property type="match status" value="1"/>
</dbReference>
<comment type="function">
    <text evidence="1">Sequence-specific endonuclease that cleaves unmethylated GATC sequences. It is involved in DNA mismatch repair.</text>
</comment>
<comment type="subcellular location">
    <subcellularLocation>
        <location evidence="1">Cytoplasm</location>
    </subcellularLocation>
</comment>
<comment type="similarity">
    <text evidence="1">Belongs to the MutH family.</text>
</comment>
<accession>A1S3W3</accession>
<feature type="chain" id="PRO_1000046705" description="DNA mismatch repair protein MutH">
    <location>
        <begin position="1"/>
        <end position="224"/>
    </location>
</feature>
<organism>
    <name type="scientific">Shewanella amazonensis (strain ATCC BAA-1098 / SB2B)</name>
    <dbReference type="NCBI Taxonomy" id="326297"/>
    <lineage>
        <taxon>Bacteria</taxon>
        <taxon>Pseudomonadati</taxon>
        <taxon>Pseudomonadota</taxon>
        <taxon>Gammaproteobacteria</taxon>
        <taxon>Alteromonadales</taxon>
        <taxon>Shewanellaceae</taxon>
        <taxon>Shewanella</taxon>
    </lineage>
</organism>
<name>MUTH_SHEAM</name>